<protein>
    <recommendedName>
        <fullName evidence="1">ATP synthase subunit c</fullName>
    </recommendedName>
    <alternativeName>
        <fullName evidence="1">ATP synthase F(0) sector subunit c</fullName>
    </alternativeName>
    <alternativeName>
        <fullName evidence="1">F-type ATPase subunit c</fullName>
        <shortName evidence="1">F-ATPase subunit c</shortName>
    </alternativeName>
    <alternativeName>
        <fullName evidence="1">Lipid-binding protein</fullName>
    </alternativeName>
</protein>
<proteinExistence type="inferred from homology"/>
<evidence type="ECO:0000255" key="1">
    <source>
        <dbReference type="HAMAP-Rule" id="MF_01396"/>
    </source>
</evidence>
<gene>
    <name evidence="1" type="primary">atpE</name>
    <name type="ordered locus">Pput_5300</name>
</gene>
<comment type="function">
    <text evidence="1">F(1)F(0) ATP synthase produces ATP from ADP in the presence of a proton or sodium gradient. F-type ATPases consist of two structural domains, F(1) containing the extramembraneous catalytic core and F(0) containing the membrane proton channel, linked together by a central stalk and a peripheral stalk. During catalysis, ATP synthesis in the catalytic domain of F(1) is coupled via a rotary mechanism of the central stalk subunits to proton translocation.</text>
</comment>
<comment type="function">
    <text evidence="1">Key component of the F(0) channel; it plays a direct role in translocation across the membrane. A homomeric c-ring of between 10-14 subunits forms the central stalk rotor element with the F(1) delta and epsilon subunits.</text>
</comment>
<comment type="subunit">
    <text evidence="1">F-type ATPases have 2 components, F(1) - the catalytic core - and F(0) - the membrane proton channel. F(1) has five subunits: alpha(3), beta(3), gamma(1), delta(1), epsilon(1). F(0) has three main subunits: a(1), b(2) and c(10-14). The alpha and beta chains form an alternating ring which encloses part of the gamma chain. F(1) is attached to F(0) by a central stalk formed by the gamma and epsilon chains, while a peripheral stalk is formed by the delta and b chains.</text>
</comment>
<comment type="subcellular location">
    <subcellularLocation>
        <location evidence="1">Cell inner membrane</location>
        <topology evidence="1">Multi-pass membrane protein</topology>
    </subcellularLocation>
</comment>
<comment type="similarity">
    <text evidence="1">Belongs to the ATPase C chain family.</text>
</comment>
<name>ATPL_PSEP1</name>
<dbReference type="EMBL" id="CP000712">
    <property type="protein sequence ID" value="ABQ81418.1"/>
    <property type="molecule type" value="Genomic_DNA"/>
</dbReference>
<dbReference type="SMR" id="A5WBA8"/>
<dbReference type="KEGG" id="ppf:Pput_5300"/>
<dbReference type="eggNOG" id="ENOG5032S3K">
    <property type="taxonomic scope" value="Bacteria"/>
</dbReference>
<dbReference type="HOGENOM" id="CLU_148047_1_0_6"/>
<dbReference type="GO" id="GO:0005886">
    <property type="term" value="C:plasma membrane"/>
    <property type="evidence" value="ECO:0007669"/>
    <property type="project" value="UniProtKB-SubCell"/>
</dbReference>
<dbReference type="GO" id="GO:0045259">
    <property type="term" value="C:proton-transporting ATP synthase complex"/>
    <property type="evidence" value="ECO:0007669"/>
    <property type="project" value="UniProtKB-KW"/>
</dbReference>
<dbReference type="GO" id="GO:0033177">
    <property type="term" value="C:proton-transporting two-sector ATPase complex, proton-transporting domain"/>
    <property type="evidence" value="ECO:0007669"/>
    <property type="project" value="InterPro"/>
</dbReference>
<dbReference type="GO" id="GO:0008289">
    <property type="term" value="F:lipid binding"/>
    <property type="evidence" value="ECO:0007669"/>
    <property type="project" value="UniProtKB-KW"/>
</dbReference>
<dbReference type="GO" id="GO:0046933">
    <property type="term" value="F:proton-transporting ATP synthase activity, rotational mechanism"/>
    <property type="evidence" value="ECO:0007669"/>
    <property type="project" value="UniProtKB-UniRule"/>
</dbReference>
<dbReference type="CDD" id="cd18185">
    <property type="entry name" value="ATP-synt_Fo_c_ATPE"/>
    <property type="match status" value="1"/>
</dbReference>
<dbReference type="FunFam" id="1.20.20.10:FF:000002">
    <property type="entry name" value="ATP synthase subunit c"/>
    <property type="match status" value="1"/>
</dbReference>
<dbReference type="Gene3D" id="1.20.20.10">
    <property type="entry name" value="F1F0 ATP synthase subunit C"/>
    <property type="match status" value="1"/>
</dbReference>
<dbReference type="HAMAP" id="MF_01396">
    <property type="entry name" value="ATP_synth_c_bact"/>
    <property type="match status" value="1"/>
</dbReference>
<dbReference type="InterPro" id="IPR005953">
    <property type="entry name" value="ATP_synth_csu_bac/chlpt"/>
</dbReference>
<dbReference type="InterPro" id="IPR000454">
    <property type="entry name" value="ATP_synth_F0_csu"/>
</dbReference>
<dbReference type="InterPro" id="IPR020537">
    <property type="entry name" value="ATP_synth_F0_csu_DDCD_BS"/>
</dbReference>
<dbReference type="InterPro" id="IPR038662">
    <property type="entry name" value="ATP_synth_F0_csu_sf"/>
</dbReference>
<dbReference type="InterPro" id="IPR002379">
    <property type="entry name" value="ATPase_proteolipid_c-like_dom"/>
</dbReference>
<dbReference type="InterPro" id="IPR035921">
    <property type="entry name" value="F/V-ATP_Csub_sf"/>
</dbReference>
<dbReference type="NCBIfam" id="TIGR01260">
    <property type="entry name" value="ATP_synt_c"/>
    <property type="match status" value="1"/>
</dbReference>
<dbReference type="NCBIfam" id="NF005363">
    <property type="entry name" value="PRK06876.1"/>
    <property type="match status" value="1"/>
</dbReference>
<dbReference type="Pfam" id="PF00137">
    <property type="entry name" value="ATP-synt_C"/>
    <property type="match status" value="1"/>
</dbReference>
<dbReference type="PRINTS" id="PR00124">
    <property type="entry name" value="ATPASEC"/>
</dbReference>
<dbReference type="SUPFAM" id="SSF81333">
    <property type="entry name" value="F1F0 ATP synthase subunit C"/>
    <property type="match status" value="1"/>
</dbReference>
<dbReference type="PROSITE" id="PS00605">
    <property type="entry name" value="ATPASE_C"/>
    <property type="match status" value="1"/>
</dbReference>
<reference key="1">
    <citation type="submission" date="2007-05" db="EMBL/GenBank/DDBJ databases">
        <title>Complete sequence of Pseudomonas putida F1.</title>
        <authorList>
            <consortium name="US DOE Joint Genome Institute"/>
            <person name="Copeland A."/>
            <person name="Lucas S."/>
            <person name="Lapidus A."/>
            <person name="Barry K."/>
            <person name="Detter J.C."/>
            <person name="Glavina del Rio T."/>
            <person name="Hammon N."/>
            <person name="Israni S."/>
            <person name="Dalin E."/>
            <person name="Tice H."/>
            <person name="Pitluck S."/>
            <person name="Chain P."/>
            <person name="Malfatti S."/>
            <person name="Shin M."/>
            <person name="Vergez L."/>
            <person name="Schmutz J."/>
            <person name="Larimer F."/>
            <person name="Land M."/>
            <person name="Hauser L."/>
            <person name="Kyrpides N."/>
            <person name="Lykidis A."/>
            <person name="Parales R."/>
            <person name="Richardson P."/>
        </authorList>
    </citation>
    <scope>NUCLEOTIDE SEQUENCE [LARGE SCALE GENOMIC DNA]</scope>
    <source>
        <strain>ATCC 700007 / DSM 6899 / JCM 31910 / BCRC 17059 / LMG 24140 / F1</strain>
    </source>
</reference>
<organism>
    <name type="scientific">Pseudomonas putida (strain ATCC 700007 / DSM 6899 / JCM 31910 / BCRC 17059 / LMG 24140 / F1)</name>
    <dbReference type="NCBI Taxonomy" id="351746"/>
    <lineage>
        <taxon>Bacteria</taxon>
        <taxon>Pseudomonadati</taxon>
        <taxon>Pseudomonadota</taxon>
        <taxon>Gammaproteobacteria</taxon>
        <taxon>Pseudomonadales</taxon>
        <taxon>Pseudomonadaceae</taxon>
        <taxon>Pseudomonas</taxon>
    </lineage>
</organism>
<sequence>METVVGLTAIAVALLIGLGALGTAIGFGLLGGKFLEGAARQPEMVPMLQVKMFIVAGLLDAVTMIGVGIALFFTFANPFVGQIAG</sequence>
<keyword id="KW-0066">ATP synthesis</keyword>
<keyword id="KW-0997">Cell inner membrane</keyword>
<keyword id="KW-1003">Cell membrane</keyword>
<keyword id="KW-0138">CF(0)</keyword>
<keyword id="KW-0375">Hydrogen ion transport</keyword>
<keyword id="KW-0406">Ion transport</keyword>
<keyword id="KW-0446">Lipid-binding</keyword>
<keyword id="KW-0472">Membrane</keyword>
<keyword id="KW-0812">Transmembrane</keyword>
<keyword id="KW-1133">Transmembrane helix</keyword>
<keyword id="KW-0813">Transport</keyword>
<feature type="chain" id="PRO_1000184442" description="ATP synthase subunit c">
    <location>
        <begin position="1"/>
        <end position="85"/>
    </location>
</feature>
<feature type="transmembrane region" description="Helical" evidence="1">
    <location>
        <begin position="10"/>
        <end position="30"/>
    </location>
</feature>
<feature type="transmembrane region" description="Helical" evidence="1">
    <location>
        <begin position="53"/>
        <end position="73"/>
    </location>
</feature>
<feature type="site" description="Reversibly protonated during proton transport" evidence="1">
    <location>
        <position position="60"/>
    </location>
</feature>
<accession>A5WBA8</accession>